<organism>
    <name type="scientific">Gallus gallus</name>
    <name type="common">Chicken</name>
    <dbReference type="NCBI Taxonomy" id="9031"/>
    <lineage>
        <taxon>Eukaryota</taxon>
        <taxon>Metazoa</taxon>
        <taxon>Chordata</taxon>
        <taxon>Craniata</taxon>
        <taxon>Vertebrata</taxon>
        <taxon>Euteleostomi</taxon>
        <taxon>Archelosauria</taxon>
        <taxon>Archosauria</taxon>
        <taxon>Dinosauria</taxon>
        <taxon>Saurischia</taxon>
        <taxon>Theropoda</taxon>
        <taxon>Coelurosauria</taxon>
        <taxon>Aves</taxon>
        <taxon>Neognathae</taxon>
        <taxon>Galloanserae</taxon>
        <taxon>Galliformes</taxon>
        <taxon>Phasianidae</taxon>
        <taxon>Phasianinae</taxon>
        <taxon>Gallus</taxon>
    </lineage>
</organism>
<reference key="1">
    <citation type="submission" date="2001-12" db="EMBL/GenBank/DDBJ databases">
        <title>Protein-protein interactions of Kvbeta.</title>
        <authorList>
            <person name="Venkataramu C.R."/>
            <person name="Sokolowski B.H.A."/>
        </authorList>
    </citation>
    <scope>NUCLEOTIDE SEQUENCE [MRNA]</scope>
    <source>
        <tissue>Inner ear</tissue>
    </source>
</reference>
<reference key="2">
    <citation type="journal article" date="2005" name="Genome Biol.">
        <title>Full-length cDNAs from chicken bursal lymphocytes to facilitate gene function analysis.</title>
        <authorList>
            <person name="Caldwell R.B."/>
            <person name="Kierzek A.M."/>
            <person name="Arakawa H."/>
            <person name="Bezzubov Y."/>
            <person name="Zaim J."/>
            <person name="Fiedler P."/>
            <person name="Kutter S."/>
            <person name="Blagodatski A."/>
            <person name="Kostovska D."/>
            <person name="Koter M."/>
            <person name="Plachy J."/>
            <person name="Carninci P."/>
            <person name="Hayashizaki Y."/>
            <person name="Buerstedde J.-M."/>
        </authorList>
    </citation>
    <scope>NUCLEOTIDE SEQUENCE [LARGE SCALE MRNA]</scope>
    <source>
        <strain>CB</strain>
        <tissue>Bursa of Fabricius</tissue>
    </source>
</reference>
<protein>
    <recommendedName>
        <fullName>Small ubiquitin-related modifier 1</fullName>
        <shortName>SUMO-1</shortName>
    </recommendedName>
</protein>
<sequence>MSDQEAKPSAEDLGDKKEGEYIKLKVIGQDSSEIHFKVKMTTHLKKLKESYCQRQGVPMNSLRFLFEGQRITDNHTPKELGMEEEDVIEVYQEQTGGHSTV</sequence>
<comment type="function">
    <text evidence="2">Ubiquitin-like protein that can be covalently attached to proteins as a monomer or a lysine-linked polymer. Covalent attachment via an isopeptide bond to its substrates requires prior activation by the E1 complex SAE1-SAE2 and linkage to the E2 enzyme UBE2I. This post-translational modification on lysine residues of proteins plays a crucial role in a number of cellular processes such as nuclear transport, DNA replication and repair, mitosis and signal transduction. Polymeric SUMO1 chains are also susceptible to polyubiquitination which functions as a signal for proteasomal degradation of modified proteins.</text>
</comment>
<comment type="subunit">
    <text evidence="2">Interacts with SAE2, UBE2I, RANBP2, PIAS1 and PIAS2 (By similarity). Covalently attached to a number of proteins (By similarity).</text>
</comment>
<comment type="subcellular location">
    <subcellularLocation>
        <location evidence="2">Nucleus membrane</location>
    </subcellularLocation>
    <subcellularLocation>
        <location evidence="3">Nucleus speckle</location>
    </subcellularLocation>
    <subcellularLocation>
        <location evidence="2">Cytoplasm</location>
    </subcellularLocation>
    <subcellularLocation>
        <location evidence="2">Nucleus</location>
        <location evidence="2">PML body</location>
    </subcellularLocation>
    <subcellularLocation>
        <location evidence="2">Cell membrane</location>
    </subcellularLocation>
    <subcellularLocation>
        <location evidence="2">Nucleus</location>
    </subcellularLocation>
</comment>
<comment type="PTM">
    <text evidence="2">Cleavage of precursor form by a sentrin-specific protease is necessary for function.</text>
</comment>
<comment type="similarity">
    <text evidence="5">Belongs to the ubiquitin family. SUMO subfamily.</text>
</comment>
<keyword id="KW-1003">Cell membrane</keyword>
<keyword id="KW-0963">Cytoplasm</keyword>
<keyword id="KW-1017">Isopeptide bond</keyword>
<keyword id="KW-0472">Membrane</keyword>
<keyword id="KW-0539">Nucleus</keyword>
<keyword id="KW-1185">Reference proteome</keyword>
<keyword id="KW-0833">Ubl conjugation pathway</keyword>
<proteinExistence type="inferred from homology"/>
<gene>
    <name type="primary">SUMO1</name>
    <name type="ORF">RCJMB04_2j18</name>
</gene>
<evidence type="ECO:0000250" key="1"/>
<evidence type="ECO:0000250" key="2">
    <source>
        <dbReference type="UniProtKB" id="P63165"/>
    </source>
</evidence>
<evidence type="ECO:0000250" key="3">
    <source>
        <dbReference type="UniProtKB" id="P63166"/>
    </source>
</evidence>
<evidence type="ECO:0000255" key="4">
    <source>
        <dbReference type="PROSITE-ProRule" id="PRU00214"/>
    </source>
</evidence>
<evidence type="ECO:0000305" key="5"/>
<accession>Q8QGH2</accession>
<feature type="chain" id="PRO_0000267614" description="Small ubiquitin-related modifier 1">
    <location>
        <begin position="1"/>
        <end position="97"/>
    </location>
</feature>
<feature type="propeptide" id="PRO_0000267615" evidence="1">
    <location>
        <begin position="98"/>
        <end position="101"/>
    </location>
</feature>
<feature type="domain" description="Ubiquitin-like" evidence="4">
    <location>
        <begin position="20"/>
        <end position="97"/>
    </location>
</feature>
<feature type="cross-link" description="Glycyl lysine isopeptide (Gly-Lys) (interchain with K-? in acceptor proteins)" evidence="4">
    <location>
        <position position="97"/>
    </location>
</feature>
<name>SUMO1_CHICK</name>
<dbReference type="EMBL" id="AF461015">
    <property type="protein sequence ID" value="AAL85281.1"/>
    <property type="molecule type" value="mRNA"/>
</dbReference>
<dbReference type="EMBL" id="AJ719470">
    <property type="protein sequence ID" value="CAG31129.1"/>
    <property type="molecule type" value="mRNA"/>
</dbReference>
<dbReference type="RefSeq" id="NP_989466.1">
    <property type="nucleotide sequence ID" value="NM_204135.2"/>
</dbReference>
<dbReference type="SMR" id="Q8QGH2"/>
<dbReference type="FunCoup" id="Q8QGH2">
    <property type="interactions" value="1960"/>
</dbReference>
<dbReference type="STRING" id="9031.ENSGALP00000069231"/>
<dbReference type="PaxDb" id="9031-ENSGALP00000013729"/>
<dbReference type="Ensembl" id="ENSGALT00010061337.1">
    <property type="protein sequence ID" value="ENSGALP00010037922.1"/>
    <property type="gene ID" value="ENSGALG00010025131.1"/>
</dbReference>
<dbReference type="GeneID" id="373930"/>
<dbReference type="KEGG" id="gga:373930"/>
<dbReference type="CTD" id="7341"/>
<dbReference type="VEuPathDB" id="HostDB:geneid_373930"/>
<dbReference type="eggNOG" id="KOG1769">
    <property type="taxonomic scope" value="Eukaryota"/>
</dbReference>
<dbReference type="GeneTree" id="ENSGT00940000154319"/>
<dbReference type="HOGENOM" id="CLU_148322_0_0_1"/>
<dbReference type="InParanoid" id="Q8QGH2"/>
<dbReference type="OMA" id="DQSHAAR"/>
<dbReference type="OrthoDB" id="442921at2759"/>
<dbReference type="PhylomeDB" id="Q8QGH2"/>
<dbReference type="Reactome" id="R-GGA-3065676">
    <property type="pathway name" value="SUMO is conjugated to E1 (UBA2:SAE1)"/>
</dbReference>
<dbReference type="Reactome" id="R-GGA-3065678">
    <property type="pathway name" value="SUMO is transferred from E1 to E2 (UBE2I, UBC9)"/>
</dbReference>
<dbReference type="Reactome" id="R-GGA-3065679">
    <property type="pathway name" value="SUMO is proteolytically processed"/>
</dbReference>
<dbReference type="Reactome" id="R-GGA-3108214">
    <property type="pathway name" value="SUMOylation of DNA damage response and repair proteins"/>
</dbReference>
<dbReference type="Reactome" id="R-GGA-3232118">
    <property type="pathway name" value="SUMOylation of transcription factors"/>
</dbReference>
<dbReference type="Reactome" id="R-GGA-3232142">
    <property type="pathway name" value="SUMOylation of ubiquitinylation proteins"/>
</dbReference>
<dbReference type="Reactome" id="R-GGA-3899300">
    <property type="pathway name" value="SUMOylation of transcription cofactors"/>
</dbReference>
<dbReference type="Reactome" id="R-GGA-4085377">
    <property type="pathway name" value="SUMOylation of SUMOylation proteins"/>
</dbReference>
<dbReference type="Reactome" id="R-GGA-4090294">
    <property type="pathway name" value="SUMOylation of intracellular receptors"/>
</dbReference>
<dbReference type="Reactome" id="R-GGA-4551638">
    <property type="pathway name" value="SUMOylation of chromatin organization proteins"/>
</dbReference>
<dbReference type="Reactome" id="R-GGA-4570464">
    <property type="pathway name" value="SUMOylation of RNA binding proteins"/>
</dbReference>
<dbReference type="Reactome" id="R-GGA-4615885">
    <property type="pathway name" value="SUMOylation of DNA replication proteins"/>
</dbReference>
<dbReference type="Reactome" id="R-GGA-4655427">
    <property type="pathway name" value="SUMOylation of DNA methylation proteins"/>
</dbReference>
<dbReference type="Reactome" id="R-GGA-4755510">
    <property type="pathway name" value="SUMOylation of immune response proteins"/>
</dbReference>
<dbReference type="Reactome" id="R-GGA-5693565">
    <property type="pathway name" value="Recruitment and ATM-mediated phosphorylation of repair and signaling proteins at DNA double strand breaks"/>
</dbReference>
<dbReference type="Reactome" id="R-GGA-5696395">
    <property type="pathway name" value="Formation of Incision Complex in GG-NER"/>
</dbReference>
<dbReference type="Reactome" id="R-GGA-877312">
    <property type="pathway name" value="Regulation of IFNG signaling"/>
</dbReference>
<dbReference type="Reactome" id="R-GGA-8866904">
    <property type="pathway name" value="Negative regulation of activity of TFAP2 (AP-2) family transcription factors"/>
</dbReference>
<dbReference type="Reactome" id="R-GGA-9615933">
    <property type="pathway name" value="Postmitotic nuclear pore complex (NPC) reformation"/>
</dbReference>
<dbReference type="Reactome" id="R-GGA-9793242">
    <property type="pathway name" value="SUMOylation of nuclear envelope proteins"/>
</dbReference>
<dbReference type="Reactome" id="R-GGA-9856649">
    <property type="pathway name" value="Transcriptional and post-translational regulation of MITF-M expression and activity"/>
</dbReference>
<dbReference type="PRO" id="PR:Q8QGH2"/>
<dbReference type="Proteomes" id="UP000000539">
    <property type="component" value="Chromosome 7"/>
</dbReference>
<dbReference type="Bgee" id="ENSGALG00000008435">
    <property type="expression patterns" value="Expressed in lung and 12 other cell types or tissues"/>
</dbReference>
<dbReference type="GO" id="GO:0005737">
    <property type="term" value="C:cytoplasm"/>
    <property type="evidence" value="ECO:0007669"/>
    <property type="project" value="UniProtKB-SubCell"/>
</dbReference>
<dbReference type="GO" id="GO:0031965">
    <property type="term" value="C:nuclear membrane"/>
    <property type="evidence" value="ECO:0007669"/>
    <property type="project" value="UniProtKB-SubCell"/>
</dbReference>
<dbReference type="GO" id="GO:0016607">
    <property type="term" value="C:nuclear speck"/>
    <property type="evidence" value="ECO:0007669"/>
    <property type="project" value="UniProtKB-SubCell"/>
</dbReference>
<dbReference type="GO" id="GO:0097165">
    <property type="term" value="C:nuclear stress granule"/>
    <property type="evidence" value="ECO:0000250"/>
    <property type="project" value="UniProtKB"/>
</dbReference>
<dbReference type="GO" id="GO:0005634">
    <property type="term" value="C:nucleus"/>
    <property type="evidence" value="ECO:0000318"/>
    <property type="project" value="GO_Central"/>
</dbReference>
<dbReference type="GO" id="GO:0005886">
    <property type="term" value="C:plasma membrane"/>
    <property type="evidence" value="ECO:0007669"/>
    <property type="project" value="UniProtKB-SubCell"/>
</dbReference>
<dbReference type="GO" id="GO:0016605">
    <property type="term" value="C:PML body"/>
    <property type="evidence" value="ECO:0000250"/>
    <property type="project" value="UniProtKB"/>
</dbReference>
<dbReference type="GO" id="GO:0031386">
    <property type="term" value="F:protein tag activity"/>
    <property type="evidence" value="ECO:0000318"/>
    <property type="project" value="GO_Central"/>
</dbReference>
<dbReference type="GO" id="GO:0008134">
    <property type="term" value="F:transcription factor binding"/>
    <property type="evidence" value="ECO:0000250"/>
    <property type="project" value="AgBase"/>
</dbReference>
<dbReference type="GO" id="GO:0044389">
    <property type="term" value="F:ubiquitin-like protein ligase binding"/>
    <property type="evidence" value="ECO:0000318"/>
    <property type="project" value="GO_Central"/>
</dbReference>
<dbReference type="GO" id="GO:0071276">
    <property type="term" value="P:cellular response to cadmium ion"/>
    <property type="evidence" value="ECO:0000250"/>
    <property type="project" value="UniProtKB"/>
</dbReference>
<dbReference type="GO" id="GO:0034605">
    <property type="term" value="P:cellular response to heat"/>
    <property type="evidence" value="ECO:0000250"/>
    <property type="project" value="UniProtKB"/>
</dbReference>
<dbReference type="GO" id="GO:0016925">
    <property type="term" value="P:protein sumoylation"/>
    <property type="evidence" value="ECO:0000250"/>
    <property type="project" value="UniProtKB"/>
</dbReference>
<dbReference type="CDD" id="cd16114">
    <property type="entry name" value="Ubl_SUMO1"/>
    <property type="match status" value="1"/>
</dbReference>
<dbReference type="FunFam" id="3.10.20.90:FF:000092">
    <property type="entry name" value="Small ubiquitin-related modifier"/>
    <property type="match status" value="1"/>
</dbReference>
<dbReference type="Gene3D" id="3.10.20.90">
    <property type="entry name" value="Phosphatidylinositol 3-kinase Catalytic Subunit, Chain A, domain 1"/>
    <property type="match status" value="1"/>
</dbReference>
<dbReference type="InterPro" id="IPR022617">
    <property type="entry name" value="Rad60/SUMO-like_dom"/>
</dbReference>
<dbReference type="InterPro" id="IPR046332">
    <property type="entry name" value="SUMO1_Ubl"/>
</dbReference>
<dbReference type="InterPro" id="IPR000626">
    <property type="entry name" value="Ubiquitin-like_dom"/>
</dbReference>
<dbReference type="InterPro" id="IPR029071">
    <property type="entry name" value="Ubiquitin-like_domsf"/>
</dbReference>
<dbReference type="PANTHER" id="PTHR10562">
    <property type="entry name" value="SMALL UBIQUITIN-RELATED MODIFIER"/>
    <property type="match status" value="1"/>
</dbReference>
<dbReference type="Pfam" id="PF11976">
    <property type="entry name" value="Rad60-SLD"/>
    <property type="match status" value="1"/>
</dbReference>
<dbReference type="SMART" id="SM00213">
    <property type="entry name" value="UBQ"/>
    <property type="match status" value="1"/>
</dbReference>
<dbReference type="SUPFAM" id="SSF54236">
    <property type="entry name" value="Ubiquitin-like"/>
    <property type="match status" value="1"/>
</dbReference>
<dbReference type="PROSITE" id="PS50053">
    <property type="entry name" value="UBIQUITIN_2"/>
    <property type="match status" value="1"/>
</dbReference>